<keyword id="KW-0067">ATP-binding</keyword>
<keyword id="KW-0472">Membrane</keyword>
<keyword id="KW-0547">Nucleotide-binding</keyword>
<keyword id="KW-1185">Reference proteome</keyword>
<keyword id="KW-0812">Transmembrane</keyword>
<keyword id="KW-1133">Transmembrane helix</keyword>
<keyword id="KW-0813">Transport</keyword>
<organism>
    <name type="scientific">Arabidopsis thaliana</name>
    <name type="common">Mouse-ear cress</name>
    <dbReference type="NCBI Taxonomy" id="3702"/>
    <lineage>
        <taxon>Eukaryota</taxon>
        <taxon>Viridiplantae</taxon>
        <taxon>Streptophyta</taxon>
        <taxon>Embryophyta</taxon>
        <taxon>Tracheophyta</taxon>
        <taxon>Spermatophyta</taxon>
        <taxon>Magnoliopsida</taxon>
        <taxon>eudicotyledons</taxon>
        <taxon>Gunneridae</taxon>
        <taxon>Pentapetalae</taxon>
        <taxon>rosids</taxon>
        <taxon>malvids</taxon>
        <taxon>Brassicales</taxon>
        <taxon>Brassicaceae</taxon>
        <taxon>Camelineae</taxon>
        <taxon>Arabidopsis</taxon>
    </lineage>
</organism>
<accession>Q9STT5</accession>
<comment type="subcellular location">
    <subcellularLocation>
        <location evidence="4">Membrane</location>
        <topology evidence="4">Multi-pass membrane protein</topology>
    </subcellularLocation>
</comment>
<comment type="similarity">
    <text evidence="4">Belongs to the ABC transporter superfamily. ABCA family. CPR flippase (TC 3.A.1.211) subfamily.</text>
</comment>
<comment type="sequence caution" evidence="4">
    <conflict type="erroneous gene model prediction">
        <sequence resource="EMBL-CDS" id="CAB41861"/>
    </conflict>
</comment>
<gene>
    <name type="primary">ABCA7</name>
    <name type="synonym">ATH6</name>
    <name type="ordered locus">At3g47780</name>
    <name type="ORF">T23J7.110</name>
</gene>
<dbReference type="EMBL" id="AL049746">
    <property type="protein sequence ID" value="CAB41861.1"/>
    <property type="status" value="ALT_SEQ"/>
    <property type="molecule type" value="Genomic_DNA"/>
</dbReference>
<dbReference type="EMBL" id="CP002686">
    <property type="protein sequence ID" value="AEE78328.1"/>
    <property type="molecule type" value="Genomic_DNA"/>
</dbReference>
<dbReference type="PIR" id="T07717">
    <property type="entry name" value="T07717"/>
</dbReference>
<dbReference type="RefSeq" id="NP_190362.2">
    <property type="nucleotide sequence ID" value="NM_114646.4"/>
</dbReference>
<dbReference type="SMR" id="Q9STT5"/>
<dbReference type="BioGRID" id="9252">
    <property type="interactions" value="18"/>
</dbReference>
<dbReference type="FunCoup" id="Q9STT5">
    <property type="interactions" value="11"/>
</dbReference>
<dbReference type="IntAct" id="Q9STT5">
    <property type="interactions" value="17"/>
</dbReference>
<dbReference type="STRING" id="3702.Q9STT5"/>
<dbReference type="iPTMnet" id="Q9STT5"/>
<dbReference type="PaxDb" id="3702-AT3G47780.1"/>
<dbReference type="ProteomicsDB" id="244334"/>
<dbReference type="EnsemblPlants" id="AT3G47780.1">
    <property type="protein sequence ID" value="AT3G47780.1"/>
    <property type="gene ID" value="AT3G47780"/>
</dbReference>
<dbReference type="GeneID" id="823932"/>
<dbReference type="Gramene" id="AT3G47780.1">
    <property type="protein sequence ID" value="AT3G47780.1"/>
    <property type="gene ID" value="AT3G47780"/>
</dbReference>
<dbReference type="KEGG" id="ath:AT3G47780"/>
<dbReference type="Araport" id="AT3G47780"/>
<dbReference type="TAIR" id="AT3G47780">
    <property type="gene designation" value="ABCA7"/>
</dbReference>
<dbReference type="eggNOG" id="KOG0059">
    <property type="taxonomic scope" value="Eukaryota"/>
</dbReference>
<dbReference type="HOGENOM" id="CLU_000604_19_5_1"/>
<dbReference type="InParanoid" id="Q9STT5"/>
<dbReference type="OMA" id="KFTIHAW"/>
<dbReference type="PhylomeDB" id="Q9STT5"/>
<dbReference type="BioCyc" id="ARA:AT3G47780-MONOMER"/>
<dbReference type="PRO" id="PR:Q9STT5"/>
<dbReference type="Proteomes" id="UP000006548">
    <property type="component" value="Chromosome 3"/>
</dbReference>
<dbReference type="ExpressionAtlas" id="Q9STT5">
    <property type="expression patterns" value="baseline and differential"/>
</dbReference>
<dbReference type="GO" id="GO:0016020">
    <property type="term" value="C:membrane"/>
    <property type="evidence" value="ECO:0007669"/>
    <property type="project" value="UniProtKB-SubCell"/>
</dbReference>
<dbReference type="GO" id="GO:0009506">
    <property type="term" value="C:plasmodesma"/>
    <property type="evidence" value="ECO:0007005"/>
    <property type="project" value="TAIR"/>
</dbReference>
<dbReference type="GO" id="GO:0140359">
    <property type="term" value="F:ABC-type transporter activity"/>
    <property type="evidence" value="ECO:0007669"/>
    <property type="project" value="InterPro"/>
</dbReference>
<dbReference type="GO" id="GO:0005524">
    <property type="term" value="F:ATP binding"/>
    <property type="evidence" value="ECO:0007669"/>
    <property type="project" value="UniProtKB-KW"/>
</dbReference>
<dbReference type="GO" id="GO:0016887">
    <property type="term" value="F:ATP hydrolysis activity"/>
    <property type="evidence" value="ECO:0007669"/>
    <property type="project" value="InterPro"/>
</dbReference>
<dbReference type="CDD" id="cd03263">
    <property type="entry name" value="ABC_subfamily_A"/>
    <property type="match status" value="1"/>
</dbReference>
<dbReference type="FunFam" id="3.40.50.300:FF:000633">
    <property type="entry name" value="ABC transporter A family member 7"/>
    <property type="match status" value="1"/>
</dbReference>
<dbReference type="Gene3D" id="3.40.50.300">
    <property type="entry name" value="P-loop containing nucleotide triphosphate hydrolases"/>
    <property type="match status" value="1"/>
</dbReference>
<dbReference type="InterPro" id="IPR003593">
    <property type="entry name" value="AAA+_ATPase"/>
</dbReference>
<dbReference type="InterPro" id="IPR013525">
    <property type="entry name" value="ABC2_TM"/>
</dbReference>
<dbReference type="InterPro" id="IPR003439">
    <property type="entry name" value="ABC_transporter-like_ATP-bd"/>
</dbReference>
<dbReference type="InterPro" id="IPR017871">
    <property type="entry name" value="ABC_transporter-like_CS"/>
</dbReference>
<dbReference type="InterPro" id="IPR026082">
    <property type="entry name" value="ABCA"/>
</dbReference>
<dbReference type="InterPro" id="IPR027417">
    <property type="entry name" value="P-loop_NTPase"/>
</dbReference>
<dbReference type="PANTHER" id="PTHR19229:SF270">
    <property type="entry name" value="ABC TRANSPORTER A FAMILY MEMBER 7"/>
    <property type="match status" value="1"/>
</dbReference>
<dbReference type="PANTHER" id="PTHR19229">
    <property type="entry name" value="ATP-BINDING CASSETTE TRANSPORTER SUBFAMILY A ABCA"/>
    <property type="match status" value="1"/>
</dbReference>
<dbReference type="Pfam" id="PF12698">
    <property type="entry name" value="ABC2_membrane_3"/>
    <property type="match status" value="1"/>
</dbReference>
<dbReference type="Pfam" id="PF00005">
    <property type="entry name" value="ABC_tran"/>
    <property type="match status" value="1"/>
</dbReference>
<dbReference type="Pfam" id="PF24526">
    <property type="entry name" value="ABCA12_C"/>
    <property type="match status" value="1"/>
</dbReference>
<dbReference type="SMART" id="SM00382">
    <property type="entry name" value="AAA"/>
    <property type="match status" value="1"/>
</dbReference>
<dbReference type="SUPFAM" id="SSF52540">
    <property type="entry name" value="P-loop containing nucleoside triphosphate hydrolases"/>
    <property type="match status" value="1"/>
</dbReference>
<dbReference type="PROSITE" id="PS00211">
    <property type="entry name" value="ABC_TRANSPORTER_1"/>
    <property type="match status" value="1"/>
</dbReference>
<dbReference type="PROSITE" id="PS50893">
    <property type="entry name" value="ABC_TRANSPORTER_2"/>
    <property type="match status" value="1"/>
</dbReference>
<proteinExistence type="inferred from homology"/>
<reference key="1">
    <citation type="journal article" date="2000" name="Nature">
        <title>Sequence and analysis of chromosome 3 of the plant Arabidopsis thaliana.</title>
        <authorList>
            <person name="Salanoubat M."/>
            <person name="Lemcke K."/>
            <person name="Rieger M."/>
            <person name="Ansorge W."/>
            <person name="Unseld M."/>
            <person name="Fartmann B."/>
            <person name="Valle G."/>
            <person name="Bloecker H."/>
            <person name="Perez-Alonso M."/>
            <person name="Obermaier B."/>
            <person name="Delseny M."/>
            <person name="Boutry M."/>
            <person name="Grivell L.A."/>
            <person name="Mache R."/>
            <person name="Puigdomenech P."/>
            <person name="De Simone V."/>
            <person name="Choisne N."/>
            <person name="Artiguenave F."/>
            <person name="Robert C."/>
            <person name="Brottier P."/>
            <person name="Wincker P."/>
            <person name="Cattolico L."/>
            <person name="Weissenbach J."/>
            <person name="Saurin W."/>
            <person name="Quetier F."/>
            <person name="Schaefer M."/>
            <person name="Mueller-Auer S."/>
            <person name="Gabel C."/>
            <person name="Fuchs M."/>
            <person name="Benes V."/>
            <person name="Wurmbach E."/>
            <person name="Drzonek H."/>
            <person name="Erfle H."/>
            <person name="Jordan N."/>
            <person name="Bangert S."/>
            <person name="Wiedelmann R."/>
            <person name="Kranz H."/>
            <person name="Voss H."/>
            <person name="Holland R."/>
            <person name="Brandt P."/>
            <person name="Nyakatura G."/>
            <person name="Vezzi A."/>
            <person name="D'Angelo M."/>
            <person name="Pallavicini A."/>
            <person name="Toppo S."/>
            <person name="Simionati B."/>
            <person name="Conrad A."/>
            <person name="Hornischer K."/>
            <person name="Kauer G."/>
            <person name="Loehnert T.-H."/>
            <person name="Nordsiek G."/>
            <person name="Reichelt J."/>
            <person name="Scharfe M."/>
            <person name="Schoen O."/>
            <person name="Bargues M."/>
            <person name="Terol J."/>
            <person name="Climent J."/>
            <person name="Navarro P."/>
            <person name="Collado C."/>
            <person name="Perez-Perez A."/>
            <person name="Ottenwaelder B."/>
            <person name="Duchemin D."/>
            <person name="Cooke R."/>
            <person name="Laudie M."/>
            <person name="Berger-Llauro C."/>
            <person name="Purnelle B."/>
            <person name="Masuy D."/>
            <person name="de Haan M."/>
            <person name="Maarse A.C."/>
            <person name="Alcaraz J.-P."/>
            <person name="Cottet A."/>
            <person name="Casacuberta E."/>
            <person name="Monfort A."/>
            <person name="Argiriou A."/>
            <person name="Flores M."/>
            <person name="Liguori R."/>
            <person name="Vitale D."/>
            <person name="Mannhaupt G."/>
            <person name="Haase D."/>
            <person name="Schoof H."/>
            <person name="Rudd S."/>
            <person name="Zaccaria P."/>
            <person name="Mewes H.-W."/>
            <person name="Mayer K.F.X."/>
            <person name="Kaul S."/>
            <person name="Town C.D."/>
            <person name="Koo H.L."/>
            <person name="Tallon L.J."/>
            <person name="Jenkins J."/>
            <person name="Rooney T."/>
            <person name="Rizzo M."/>
            <person name="Walts A."/>
            <person name="Utterback T."/>
            <person name="Fujii C.Y."/>
            <person name="Shea T.P."/>
            <person name="Creasy T.H."/>
            <person name="Haas B."/>
            <person name="Maiti R."/>
            <person name="Wu D."/>
            <person name="Peterson J."/>
            <person name="Van Aken S."/>
            <person name="Pai G."/>
            <person name="Militscher J."/>
            <person name="Sellers P."/>
            <person name="Gill J.E."/>
            <person name="Feldblyum T.V."/>
            <person name="Preuss D."/>
            <person name="Lin X."/>
            <person name="Nierman W.C."/>
            <person name="Salzberg S.L."/>
            <person name="White O."/>
            <person name="Venter J.C."/>
            <person name="Fraser C.M."/>
            <person name="Kaneko T."/>
            <person name="Nakamura Y."/>
            <person name="Sato S."/>
            <person name="Kato T."/>
            <person name="Asamizu E."/>
            <person name="Sasamoto S."/>
            <person name="Kimura T."/>
            <person name="Idesawa K."/>
            <person name="Kawashima K."/>
            <person name="Kishida Y."/>
            <person name="Kiyokawa C."/>
            <person name="Kohara M."/>
            <person name="Matsumoto M."/>
            <person name="Matsuno A."/>
            <person name="Muraki A."/>
            <person name="Nakayama S."/>
            <person name="Nakazaki N."/>
            <person name="Shinpo S."/>
            <person name="Takeuchi C."/>
            <person name="Wada T."/>
            <person name="Watanabe A."/>
            <person name="Yamada M."/>
            <person name="Yasuda M."/>
            <person name="Tabata S."/>
        </authorList>
    </citation>
    <scope>NUCLEOTIDE SEQUENCE [LARGE SCALE GENOMIC DNA]</scope>
    <source>
        <strain>cv. Columbia</strain>
    </source>
</reference>
<reference key="2">
    <citation type="journal article" date="2017" name="Plant J.">
        <title>Araport11: a complete reannotation of the Arabidopsis thaliana reference genome.</title>
        <authorList>
            <person name="Cheng C.Y."/>
            <person name="Krishnakumar V."/>
            <person name="Chan A.P."/>
            <person name="Thibaud-Nissen F."/>
            <person name="Schobel S."/>
            <person name="Town C.D."/>
        </authorList>
    </citation>
    <scope>GENOME REANNOTATION</scope>
    <source>
        <strain>cv. Columbia</strain>
    </source>
</reference>
<reference key="3">
    <citation type="journal article" date="2001" name="J. Biol. Chem.">
        <title>The Arabidopsis thaliana ABC protein superfamily, a complete inventory.</title>
        <authorList>
            <person name="Sanchez-Fernandez R."/>
            <person name="Davies T.G."/>
            <person name="Coleman J.O."/>
            <person name="Rea P.A."/>
        </authorList>
    </citation>
    <scope>GENE FAMILY</scope>
    <scope>NOMENCLATURE</scope>
</reference>
<reference key="4">
    <citation type="journal article" date="2008" name="Trends Plant Sci.">
        <title>Plant ABC proteins - a unified nomenclature and updated inventory.</title>
        <authorList>
            <person name="Verrier P.J."/>
            <person name="Bird D."/>
            <person name="Burla B."/>
            <person name="Dassa E."/>
            <person name="Forestier C."/>
            <person name="Geisler M."/>
            <person name="Klein M."/>
            <person name="Kolukisaoglu H.U."/>
            <person name="Lee Y."/>
            <person name="Martinoia E."/>
            <person name="Murphy A."/>
            <person name="Rea P.A."/>
            <person name="Samuels L."/>
            <person name="Schulz B."/>
            <person name="Spalding E.J."/>
            <person name="Yazaki K."/>
            <person name="Theodoulou F.L."/>
        </authorList>
    </citation>
    <scope>GENE FAMILY</scope>
    <scope>NOMENCLATURE</scope>
</reference>
<sequence length="935" mass="105048">MADPGPASFSTRANALLRKNLTYQKRNLWSNIRLIMIPFYLCILLVIIQILFDTQVNNSADNRCGCECIERNRAGKCQRELCGLEHSKPDQAFFCSIPRPPLWPPLLQIPRPESRDVRGLRDDSCRRTGSCPVTILFTGNNRSLGTTVSENLFTSSVSANASEILRTLANNVLGTTVEADFTNYLDPGIASNLSIYNIQPRCILNATFPFSFEQPPLKFEKELRCVQGSNLWTNTSKEVNDKIFKGYKKGNPEGKINEIAAAYDLLNTDRNNFNVHIWYNSTYKDDAGNRLIKLIRVPRSVNLVSNAYLQFLQGPGTRMLFEYVKEMPKPETSLRLDIASLIGPLFFTWVILLLFPVILSSLVYEKQQHLRIIMKMHGLGDGPYWMISYAYFLTISVLYVICLMIFGSAIGLKFFRLNSYSIQFVFYFLYLNLQIALAFLVSSVFSKVKTSTVASYIYVFGSGLLGLFLLNFLIEDSSFPRGWIIVMELYPGFSLYRGLYELAQFAFRGNLRGEDGMKWKDFGDSAMDDVFYIIVVEWFLALIAAYYIDKISSSGRNPLFFLQNPFKKSPSLRRPSLQRQGSKVSVDMEKPDVTHESKKVERLMLESSTSHAIVCDNLKKVYPGRDGNPPKLAVRGLSLAVPSGECFGMLGPNGAGKTSFINMMTGLLKPTSGTALVQGLDICNDMDRVYTSMGVCPQHDLLWETLTGREHLLFYGRLKNLKGADLNQAVEESLKSVNLFHGGVADKPAGKYSGGMKRRLSVAISLIGNPKVVYMDEPSTGLDPASRKNLWTVIKRAKQNTAIILTTHSMEEAEFLCDRLGIFVDGGLQCIGNPKELKGRYGGSYVFTMTTSSEHEQNVEKLIKDVSPNAKKIYHIAGTQKFELPKEEVRISEVFQAVEKAKSNFTVFAWGLADTTLEDVFIKVVRNGQAFNVFS</sequence>
<protein>
    <recommendedName>
        <fullName>ABC transporter A family member 7</fullName>
        <shortName>ABC transporter ABCA.7</shortName>
        <shortName>AtABCA7</shortName>
    </recommendedName>
    <alternativeName>
        <fullName>Probable ABC2 homolog 6</fullName>
    </alternativeName>
</protein>
<name>AB7A_ARATH</name>
<feature type="chain" id="PRO_0000240328" description="ABC transporter A family member 7">
    <location>
        <begin position="1"/>
        <end position="935"/>
    </location>
</feature>
<feature type="transmembrane region" description="Helical" evidence="1">
    <location>
        <begin position="34"/>
        <end position="54"/>
    </location>
</feature>
<feature type="transmembrane region" description="Helical" evidence="1">
    <location>
        <begin position="338"/>
        <end position="358"/>
    </location>
</feature>
<feature type="transmembrane region" description="Helical" evidence="1">
    <location>
        <begin position="392"/>
        <end position="412"/>
    </location>
</feature>
<feature type="transmembrane region" description="Helical" evidence="1">
    <location>
        <begin position="424"/>
        <end position="444"/>
    </location>
</feature>
<feature type="transmembrane region" description="Helical" evidence="1">
    <location>
        <begin position="454"/>
        <end position="474"/>
    </location>
</feature>
<feature type="transmembrane region" description="Helical" evidence="1">
    <location>
        <begin position="483"/>
        <end position="503"/>
    </location>
</feature>
<feature type="transmembrane region" description="Helical" evidence="1">
    <location>
        <begin position="528"/>
        <end position="548"/>
    </location>
</feature>
<feature type="domain" description="ABC transporter" evidence="2">
    <location>
        <begin position="613"/>
        <end position="850"/>
    </location>
</feature>
<feature type="region of interest" description="Disordered" evidence="3">
    <location>
        <begin position="571"/>
        <end position="591"/>
    </location>
</feature>
<feature type="binding site" evidence="2">
    <location>
        <begin position="651"/>
        <end position="658"/>
    </location>
    <ligand>
        <name>ATP</name>
        <dbReference type="ChEBI" id="CHEBI:30616"/>
    </ligand>
</feature>
<evidence type="ECO:0000255" key="1"/>
<evidence type="ECO:0000255" key="2">
    <source>
        <dbReference type="PROSITE-ProRule" id="PRU00434"/>
    </source>
</evidence>
<evidence type="ECO:0000256" key="3">
    <source>
        <dbReference type="SAM" id="MobiDB-lite"/>
    </source>
</evidence>
<evidence type="ECO:0000305" key="4"/>